<reference key="1">
    <citation type="submission" date="2006-10" db="EMBL/GenBank/DDBJ databases">
        <title>Complete sequence of Methanosaeta thermophila PT.</title>
        <authorList>
            <consortium name="US DOE Joint Genome Institute"/>
            <person name="Copeland A."/>
            <person name="Lucas S."/>
            <person name="Lapidus A."/>
            <person name="Barry K."/>
            <person name="Detter J.C."/>
            <person name="Glavina del Rio T."/>
            <person name="Hammon N."/>
            <person name="Israni S."/>
            <person name="Pitluck S."/>
            <person name="Chain P."/>
            <person name="Malfatti S."/>
            <person name="Shin M."/>
            <person name="Vergez L."/>
            <person name="Schmutz J."/>
            <person name="Larimer F."/>
            <person name="Land M."/>
            <person name="Hauser L."/>
            <person name="Kyrpides N."/>
            <person name="Kim E."/>
            <person name="Smith K.S."/>
            <person name="Ingram-Smith C."/>
            <person name="Richardson P."/>
        </authorList>
    </citation>
    <scope>NUCLEOTIDE SEQUENCE [LARGE SCALE GENOMIC DNA]</scope>
    <source>
        <strain>DSM 6194 / JCM 14653 / NBRC 101360 / PT</strain>
    </source>
</reference>
<accession>A0B5C3</accession>
<protein>
    <recommendedName>
        <fullName evidence="1">D-aminoacyl-tRNA deacylase</fullName>
        <ecNumber evidence="1">3.1.1.96</ecNumber>
    </recommendedName>
    <alternativeName>
        <fullName>D-tyrosyl-tRNA(Tyr) deacylase</fullName>
    </alternativeName>
</protein>
<sequence>MSEVVIICSSSDPASSNIASRLLELAEWDEEGTLRFHRSYCMLCIEGELVGLRNLEDMLDRIGLSPRLIIFASRHISKEAVPWLGGHFTGVVREGSFELSRPAPYALKKLLMALQRHAPSTFRLSAEATHHGPVDLRTPSLFAEIGSCEQHWIDPAAGAAVARAILELESYEAHADETVLLGIGGGHYVQRQTELILSRPVAFGHMFSKYQASMLNVEAIKKAADLSGASGVYLDGKSFRSDERRRLEEIAASLDLNVMGIKEVRSL</sequence>
<name>DTDA_METTP</name>
<comment type="function">
    <text evidence="1">D-aminoacyl-tRNA deacylase with broad substrate specificity. By recycling D-aminoacyl-tRNA to D-amino acids and free tRNA molecules, this enzyme counteracts the toxicity associated with the formation of D-aminoacyl-tRNA entities in vivo.</text>
</comment>
<comment type="catalytic activity">
    <reaction evidence="1">
        <text>a D-aminoacyl-tRNA + H2O = a tRNA + a D-alpha-amino acid + H(+)</text>
        <dbReference type="Rhea" id="RHEA:13953"/>
        <dbReference type="Rhea" id="RHEA-COMP:10123"/>
        <dbReference type="Rhea" id="RHEA-COMP:10124"/>
        <dbReference type="ChEBI" id="CHEBI:15377"/>
        <dbReference type="ChEBI" id="CHEBI:15378"/>
        <dbReference type="ChEBI" id="CHEBI:59871"/>
        <dbReference type="ChEBI" id="CHEBI:78442"/>
        <dbReference type="ChEBI" id="CHEBI:79333"/>
        <dbReference type="EC" id="3.1.1.96"/>
    </reaction>
</comment>
<comment type="catalytic activity">
    <reaction evidence="1">
        <text>glycyl-tRNA(Ala) + H2O = tRNA(Ala) + glycine + H(+)</text>
        <dbReference type="Rhea" id="RHEA:53744"/>
        <dbReference type="Rhea" id="RHEA-COMP:9657"/>
        <dbReference type="Rhea" id="RHEA-COMP:13640"/>
        <dbReference type="ChEBI" id="CHEBI:15377"/>
        <dbReference type="ChEBI" id="CHEBI:15378"/>
        <dbReference type="ChEBI" id="CHEBI:57305"/>
        <dbReference type="ChEBI" id="CHEBI:78442"/>
        <dbReference type="ChEBI" id="CHEBI:78522"/>
        <dbReference type="EC" id="3.1.1.96"/>
    </reaction>
</comment>
<comment type="cofactor">
    <cofactor evidence="1">
        <name>Zn(2+)</name>
        <dbReference type="ChEBI" id="CHEBI:29105"/>
    </cofactor>
    <text evidence="1">Binds 2 Zn(2+) ions per subunit.</text>
</comment>
<comment type="subunit">
    <text evidence="1">Monomer.</text>
</comment>
<comment type="similarity">
    <text evidence="1">Belongs to the DtdA deacylase family.</text>
</comment>
<gene>
    <name evidence="1" type="primary">dtdA</name>
    <name type="ordered locus">Mthe_0095</name>
</gene>
<evidence type="ECO:0000255" key="1">
    <source>
        <dbReference type="HAMAP-Rule" id="MF_00562"/>
    </source>
</evidence>
<proteinExistence type="inferred from homology"/>
<dbReference type="EC" id="3.1.1.96" evidence="1"/>
<dbReference type="EMBL" id="CP000477">
    <property type="protein sequence ID" value="ABK13897.1"/>
    <property type="molecule type" value="Genomic_DNA"/>
</dbReference>
<dbReference type="RefSeq" id="WP_011695296.1">
    <property type="nucleotide sequence ID" value="NC_008553.1"/>
</dbReference>
<dbReference type="SMR" id="A0B5C3"/>
<dbReference type="STRING" id="349307.Mthe_0095"/>
<dbReference type="GeneID" id="4462487"/>
<dbReference type="KEGG" id="mtp:Mthe_0095"/>
<dbReference type="HOGENOM" id="CLU_056464_1_0_2"/>
<dbReference type="OrthoDB" id="9863at2157"/>
<dbReference type="Proteomes" id="UP000000674">
    <property type="component" value="Chromosome"/>
</dbReference>
<dbReference type="GO" id="GO:0051499">
    <property type="term" value="F:D-aminoacyl-tRNA deacylase activity"/>
    <property type="evidence" value="ECO:0007669"/>
    <property type="project" value="UniProtKB-UniRule"/>
</dbReference>
<dbReference type="GO" id="GO:0008270">
    <property type="term" value="F:zinc ion binding"/>
    <property type="evidence" value="ECO:0007669"/>
    <property type="project" value="UniProtKB-UniRule"/>
</dbReference>
<dbReference type="GO" id="GO:0019478">
    <property type="term" value="P:D-amino acid catabolic process"/>
    <property type="evidence" value="ECO:0007669"/>
    <property type="project" value="UniProtKB-UniRule"/>
</dbReference>
<dbReference type="Gene3D" id="3.40.50.10700">
    <property type="entry name" value="AF0625-like"/>
    <property type="match status" value="1"/>
</dbReference>
<dbReference type="Gene3D" id="3.40.630.50">
    <property type="entry name" value="AF0625-like"/>
    <property type="match status" value="1"/>
</dbReference>
<dbReference type="HAMAP" id="MF_00562">
    <property type="entry name" value="Deacylase_DtdA"/>
    <property type="match status" value="1"/>
</dbReference>
<dbReference type="InterPro" id="IPR018033">
    <property type="entry name" value="Deacylase_DtdA_archaea"/>
</dbReference>
<dbReference type="InterPro" id="IPR007508">
    <property type="entry name" value="DtdA"/>
</dbReference>
<dbReference type="PANTHER" id="PTHR34667">
    <property type="entry name" value="D-AMINOACYL-TRNA DEACYLASE"/>
    <property type="match status" value="1"/>
</dbReference>
<dbReference type="PANTHER" id="PTHR34667:SF1">
    <property type="entry name" value="D-AMINOACYL-TRNA DEACYLASE"/>
    <property type="match status" value="1"/>
</dbReference>
<dbReference type="Pfam" id="PF04414">
    <property type="entry name" value="tRNA_deacylase"/>
    <property type="match status" value="1"/>
</dbReference>
<dbReference type="PIRSF" id="PIRSF016210">
    <property type="entry name" value="UCP016210"/>
    <property type="match status" value="1"/>
</dbReference>
<dbReference type="SUPFAM" id="SSF142535">
    <property type="entry name" value="AF0625-like"/>
    <property type="match status" value="1"/>
</dbReference>
<keyword id="KW-0378">Hydrolase</keyword>
<keyword id="KW-0479">Metal-binding</keyword>
<keyword id="KW-1185">Reference proteome</keyword>
<keyword id="KW-0862">Zinc</keyword>
<organism>
    <name type="scientific">Methanothrix thermoacetophila (strain DSM 6194 / JCM 14653 / NBRC 101360 / PT)</name>
    <name type="common">Methanosaeta thermophila</name>
    <dbReference type="NCBI Taxonomy" id="349307"/>
    <lineage>
        <taxon>Archaea</taxon>
        <taxon>Methanobacteriati</taxon>
        <taxon>Methanobacteriota</taxon>
        <taxon>Stenosarchaea group</taxon>
        <taxon>Methanomicrobia</taxon>
        <taxon>Methanotrichales</taxon>
        <taxon>Methanotrichaceae</taxon>
        <taxon>Methanothrix</taxon>
    </lineage>
</organism>
<feature type="chain" id="PRO_0000345222" description="D-aminoacyl-tRNA deacylase">
    <location>
        <begin position="1"/>
        <end position="267"/>
    </location>
</feature>